<protein>
    <recommendedName>
        <fullName>Acetoacetyl-CoA reductase</fullName>
        <ecNumber>1.1.1.36</ecNumber>
    </recommendedName>
</protein>
<name>PHAB_PARDE</name>
<comment type="catalytic activity">
    <reaction>
        <text>a (3R)-3-hydroxyacyl-CoA + NADP(+) = a 3-oxoacyl-CoA + NADPH + H(+)</text>
        <dbReference type="Rhea" id="RHEA:22256"/>
        <dbReference type="ChEBI" id="CHEBI:15378"/>
        <dbReference type="ChEBI" id="CHEBI:57319"/>
        <dbReference type="ChEBI" id="CHEBI:57783"/>
        <dbReference type="ChEBI" id="CHEBI:58349"/>
        <dbReference type="ChEBI" id="CHEBI:90726"/>
        <dbReference type="EC" id="1.1.1.36"/>
    </reaction>
</comment>
<comment type="pathway">
    <text>Biopolymer metabolism; poly-(R)-3-hydroxybutanoate biosynthesis.</text>
</comment>
<comment type="subcellular location">
    <subcellularLocation>
        <location>Cytoplasm</location>
    </subcellularLocation>
</comment>
<comment type="miscellaneous">
    <text>NADH was preferred to NADPH as a substrate.</text>
</comment>
<comment type="similarity">
    <text evidence="3">Belongs to the short-chain dehydrogenases/reductases (SDR) family.</text>
</comment>
<organism>
    <name type="scientific">Paracoccus denitrificans</name>
    <dbReference type="NCBI Taxonomy" id="266"/>
    <lineage>
        <taxon>Bacteria</taxon>
        <taxon>Pseudomonadati</taxon>
        <taxon>Pseudomonadota</taxon>
        <taxon>Alphaproteobacteria</taxon>
        <taxon>Rhodobacterales</taxon>
        <taxon>Paracoccaceae</taxon>
        <taxon>Paracoccus</taxon>
    </lineage>
</organism>
<evidence type="ECO:0000250" key="1"/>
<evidence type="ECO:0000255" key="2">
    <source>
        <dbReference type="PROSITE-ProRule" id="PRU10001"/>
    </source>
</evidence>
<evidence type="ECO:0000305" key="3"/>
<accession>P50204</accession>
<gene>
    <name type="primary">phaB</name>
</gene>
<reference key="1">
    <citation type="journal article" date="1995" name="FEMS Microbiol. Lett.">
        <title>Analysis of beta-ketothiolase and acetoacetyl-CoA reductase genes of a methylotrophic bacterium, Paracoccus denitrificans, and their expression in Escherichia coli.</title>
        <authorList>
            <person name="Yabutani T."/>
            <person name="Maehara A."/>
            <person name="Ueda S."/>
            <person name="Yamane T."/>
        </authorList>
    </citation>
    <scope>NUCLEOTIDE SEQUENCE [GENOMIC DNA]</scope>
</reference>
<proteinExistence type="inferred from homology"/>
<dbReference type="EC" id="1.1.1.36"/>
<dbReference type="EMBL" id="D49362">
    <property type="protein sequence ID" value="BAA08358.1"/>
    <property type="molecule type" value="Genomic_DNA"/>
</dbReference>
<dbReference type="SMR" id="P50204"/>
<dbReference type="UniPathway" id="UPA00917"/>
<dbReference type="GO" id="GO:0005737">
    <property type="term" value="C:cytoplasm"/>
    <property type="evidence" value="ECO:0007669"/>
    <property type="project" value="UniProtKB-SubCell"/>
</dbReference>
<dbReference type="GO" id="GO:0018454">
    <property type="term" value="F:acetoacetyl-CoA reductase activity"/>
    <property type="evidence" value="ECO:0007669"/>
    <property type="project" value="UniProtKB-EC"/>
</dbReference>
<dbReference type="GO" id="GO:0006629">
    <property type="term" value="P:lipid metabolic process"/>
    <property type="evidence" value="ECO:0007669"/>
    <property type="project" value="UniProtKB-ARBA"/>
</dbReference>
<dbReference type="GO" id="GO:0032787">
    <property type="term" value="P:monocarboxylic acid metabolic process"/>
    <property type="evidence" value="ECO:0007669"/>
    <property type="project" value="UniProtKB-ARBA"/>
</dbReference>
<dbReference type="GO" id="GO:0042619">
    <property type="term" value="P:poly-hydroxybutyrate biosynthetic process"/>
    <property type="evidence" value="ECO:0007669"/>
    <property type="project" value="UniProtKB-KW"/>
</dbReference>
<dbReference type="CDD" id="cd05333">
    <property type="entry name" value="BKR_SDR_c"/>
    <property type="match status" value="1"/>
</dbReference>
<dbReference type="FunFam" id="3.40.50.720:FF:000173">
    <property type="entry name" value="3-oxoacyl-[acyl-carrier protein] reductase"/>
    <property type="match status" value="1"/>
</dbReference>
<dbReference type="Gene3D" id="3.40.50.720">
    <property type="entry name" value="NAD(P)-binding Rossmann-like Domain"/>
    <property type="match status" value="1"/>
</dbReference>
<dbReference type="InterPro" id="IPR011283">
    <property type="entry name" value="Acetoacetyl-CoA_reductase"/>
</dbReference>
<dbReference type="InterPro" id="IPR036291">
    <property type="entry name" value="NAD(P)-bd_dom_sf"/>
</dbReference>
<dbReference type="InterPro" id="IPR020904">
    <property type="entry name" value="Sc_DH/Rdtase_CS"/>
</dbReference>
<dbReference type="InterPro" id="IPR050259">
    <property type="entry name" value="SDR"/>
</dbReference>
<dbReference type="InterPro" id="IPR002347">
    <property type="entry name" value="SDR_fam"/>
</dbReference>
<dbReference type="NCBIfam" id="TIGR01829">
    <property type="entry name" value="AcAcCoA_reduct"/>
    <property type="match status" value="1"/>
</dbReference>
<dbReference type="NCBIfam" id="NF009464">
    <property type="entry name" value="PRK12824.1"/>
    <property type="match status" value="1"/>
</dbReference>
<dbReference type="NCBIfam" id="NF009466">
    <property type="entry name" value="PRK12826.1-2"/>
    <property type="match status" value="1"/>
</dbReference>
<dbReference type="PANTHER" id="PTHR42879">
    <property type="entry name" value="3-OXOACYL-(ACYL-CARRIER-PROTEIN) REDUCTASE"/>
    <property type="match status" value="1"/>
</dbReference>
<dbReference type="PANTHER" id="PTHR42879:SF2">
    <property type="entry name" value="3-OXOACYL-[ACYL-CARRIER-PROTEIN] REDUCTASE FABG"/>
    <property type="match status" value="1"/>
</dbReference>
<dbReference type="Pfam" id="PF00106">
    <property type="entry name" value="adh_short"/>
    <property type="match status" value="1"/>
</dbReference>
<dbReference type="PRINTS" id="PR00081">
    <property type="entry name" value="GDHRDH"/>
</dbReference>
<dbReference type="PRINTS" id="PR00080">
    <property type="entry name" value="SDRFAMILY"/>
</dbReference>
<dbReference type="SMART" id="SM00822">
    <property type="entry name" value="PKS_KR"/>
    <property type="match status" value="1"/>
</dbReference>
<dbReference type="SUPFAM" id="SSF51735">
    <property type="entry name" value="NAD(P)-binding Rossmann-fold domains"/>
    <property type="match status" value="1"/>
</dbReference>
<dbReference type="PROSITE" id="PS00061">
    <property type="entry name" value="ADH_SHORT"/>
    <property type="match status" value="1"/>
</dbReference>
<feature type="chain" id="PRO_0000054747" description="Acetoacetyl-CoA reductase">
    <location>
        <begin position="1"/>
        <end position="242"/>
    </location>
</feature>
<feature type="active site" description="Proton acceptor" evidence="2">
    <location>
        <position position="147"/>
    </location>
</feature>
<feature type="binding site" evidence="1">
    <location>
        <begin position="12"/>
        <end position="14"/>
    </location>
    <ligand>
        <name>NADP(+)</name>
        <dbReference type="ChEBI" id="CHEBI:58349"/>
    </ligand>
</feature>
<feature type="binding site" evidence="1">
    <location>
        <begin position="82"/>
        <end position="86"/>
    </location>
    <ligand>
        <name>NADP(+)</name>
        <dbReference type="ChEBI" id="CHEBI:58349"/>
    </ligand>
</feature>
<feature type="binding site" evidence="1">
    <location>
        <position position="88"/>
    </location>
    <ligand>
        <name>substrate</name>
    </ligand>
</feature>
<feature type="binding site" evidence="1">
    <location>
        <begin position="141"/>
        <end position="144"/>
    </location>
    <ligand>
        <name>substrate</name>
    </ligand>
</feature>
<feature type="binding site" evidence="1">
    <location>
        <begin position="177"/>
        <end position="180"/>
    </location>
    <ligand>
        <name>NADP(+)</name>
        <dbReference type="ChEBI" id="CHEBI:58349"/>
    </ligand>
</feature>
<feature type="binding site" evidence="1">
    <location>
        <begin position="178"/>
        <end position="179"/>
    </location>
    <ligand>
        <name>substrate</name>
    </ligand>
</feature>
<keyword id="KW-0963">Cytoplasm</keyword>
<keyword id="KW-0520">NAD</keyword>
<keyword id="KW-0521">NADP</keyword>
<keyword id="KW-0560">Oxidoreductase</keyword>
<keyword id="KW-0583">PHB biosynthesis</keyword>
<sequence length="242" mass="25615">MAKVALVTGGSRGIGAAISKALKEAGYTVAANYAGNDDAARAFTEETGIKTYKWSVADYDACAAGIKQVEEELGPIAVLVNNAGITRDAMFHKMTPQQWKEVIDTNLTGLFNMTHPVWSGMRDRKYGRIVNISSINGQKGQAGQANYSAAKAGDLGFTKALAQEGARAGITVNAICPGYIGTEMVRAIDEKVLNEGIIPQIPVAAWAEPEEIARCVVFLASEDAGFITGSTHQAPNGGQFFV</sequence>